<keyword id="KW-0067">ATP-binding</keyword>
<keyword id="KW-0131">Cell cycle</keyword>
<keyword id="KW-0132">Cell division</keyword>
<keyword id="KW-0903">Direct protein sequencing</keyword>
<keyword id="KW-0227">DNA damage</keyword>
<keyword id="KW-0233">DNA recombination</keyword>
<keyword id="KW-0234">DNA repair</keyword>
<keyword id="KW-0235">DNA replication</keyword>
<keyword id="KW-0436">Ligase</keyword>
<keyword id="KW-0460">Magnesium</keyword>
<keyword id="KW-0479">Metal-binding</keyword>
<keyword id="KW-0520">NAD</keyword>
<keyword id="KW-0547">Nucleotide-binding</keyword>
<keyword id="KW-1185">Reference proteome</keyword>
<protein>
    <recommendedName>
        <fullName evidence="1 3">DNA ligase</fullName>
        <ecNumber evidence="1 2">6.5.1.6</ecNumber>
    </recommendedName>
    <alternativeName>
        <fullName evidence="3">Lig(Tk)</fullName>
    </alternativeName>
    <alternativeName>
        <fullName evidence="1 4">Polydeoxyribonucleotide synthase [ATP/NAD(+)]</fullName>
    </alternativeName>
</protein>
<organism>
    <name type="scientific">Thermococcus kodakarensis (strain ATCC BAA-918 / JCM 12380 / KOD1)</name>
    <name type="common">Pyrococcus kodakaraensis (strain KOD1)</name>
    <dbReference type="NCBI Taxonomy" id="69014"/>
    <lineage>
        <taxon>Archaea</taxon>
        <taxon>Methanobacteriati</taxon>
        <taxon>Methanobacteriota</taxon>
        <taxon>Thermococci</taxon>
        <taxon>Thermococcales</taxon>
        <taxon>Thermococcaceae</taxon>
        <taxon>Thermococcus</taxon>
    </lineage>
</organism>
<gene>
    <name evidence="1" type="primary">lig</name>
    <name type="ordered locus">TK2140</name>
</gene>
<dbReference type="EC" id="6.5.1.6" evidence="1 2"/>
<dbReference type="EMBL" id="AB042527">
    <property type="protein sequence ID" value="BAB15949.1"/>
    <property type="status" value="ALT_INIT"/>
    <property type="molecule type" value="Genomic_DNA"/>
</dbReference>
<dbReference type="EMBL" id="AP006878">
    <property type="protein sequence ID" value="BAD86329.1"/>
    <property type="status" value="ALT_INIT"/>
    <property type="molecule type" value="Genomic_DNA"/>
</dbReference>
<dbReference type="RefSeq" id="WP_048053886.1">
    <property type="nucleotide sequence ID" value="NC_006624.1"/>
</dbReference>
<dbReference type="SMR" id="Q9HHC4"/>
<dbReference type="FunCoup" id="Q9HHC4">
    <property type="interactions" value="150"/>
</dbReference>
<dbReference type="STRING" id="69014.TK2140"/>
<dbReference type="EnsemblBacteria" id="BAD86329">
    <property type="protein sequence ID" value="BAD86329"/>
    <property type="gene ID" value="TK2140"/>
</dbReference>
<dbReference type="GeneID" id="78448677"/>
<dbReference type="KEGG" id="tko:TK2140"/>
<dbReference type="PATRIC" id="fig|69014.16.peg.2096"/>
<dbReference type="eggNOG" id="arCOG01347">
    <property type="taxonomic scope" value="Archaea"/>
</dbReference>
<dbReference type="HOGENOM" id="CLU_005138_6_0_2"/>
<dbReference type="InParanoid" id="Q9HHC4"/>
<dbReference type="OrthoDB" id="31274at2157"/>
<dbReference type="PhylomeDB" id="Q9HHC4"/>
<dbReference type="BRENDA" id="6.5.1.1">
    <property type="organism ID" value="5246"/>
</dbReference>
<dbReference type="Proteomes" id="UP000000536">
    <property type="component" value="Chromosome"/>
</dbReference>
<dbReference type="GO" id="GO:0005524">
    <property type="term" value="F:ATP binding"/>
    <property type="evidence" value="ECO:0007669"/>
    <property type="project" value="UniProtKB-UniRule"/>
</dbReference>
<dbReference type="GO" id="GO:0003677">
    <property type="term" value="F:DNA binding"/>
    <property type="evidence" value="ECO:0007669"/>
    <property type="project" value="InterPro"/>
</dbReference>
<dbReference type="GO" id="GO:0003910">
    <property type="term" value="F:DNA ligase (ATP) activity"/>
    <property type="evidence" value="ECO:0000318"/>
    <property type="project" value="GO_Central"/>
</dbReference>
<dbReference type="GO" id="GO:0046872">
    <property type="term" value="F:metal ion binding"/>
    <property type="evidence" value="ECO:0007669"/>
    <property type="project" value="UniProtKB-KW"/>
</dbReference>
<dbReference type="GO" id="GO:0051301">
    <property type="term" value="P:cell division"/>
    <property type="evidence" value="ECO:0007669"/>
    <property type="project" value="UniProtKB-KW"/>
</dbReference>
<dbReference type="GO" id="GO:0071897">
    <property type="term" value="P:DNA biosynthetic process"/>
    <property type="evidence" value="ECO:0007669"/>
    <property type="project" value="InterPro"/>
</dbReference>
<dbReference type="GO" id="GO:0006310">
    <property type="term" value="P:DNA recombination"/>
    <property type="evidence" value="ECO:0007669"/>
    <property type="project" value="UniProtKB-UniRule"/>
</dbReference>
<dbReference type="GO" id="GO:0006281">
    <property type="term" value="P:DNA repair"/>
    <property type="evidence" value="ECO:0007669"/>
    <property type="project" value="UniProtKB-UniRule"/>
</dbReference>
<dbReference type="GO" id="GO:0006273">
    <property type="term" value="P:lagging strand elongation"/>
    <property type="evidence" value="ECO:0000318"/>
    <property type="project" value="GO_Central"/>
</dbReference>
<dbReference type="CDD" id="cd07901">
    <property type="entry name" value="Adenylation_DNA_ligase_Arch_LigB"/>
    <property type="match status" value="1"/>
</dbReference>
<dbReference type="CDD" id="cd07972">
    <property type="entry name" value="OBF_DNA_ligase_Arch_LigB"/>
    <property type="match status" value="1"/>
</dbReference>
<dbReference type="FunFam" id="1.10.3260.10:FF:000007">
    <property type="entry name" value="DNA ligase"/>
    <property type="match status" value="1"/>
</dbReference>
<dbReference type="FunFam" id="2.40.50.140:FF:000163">
    <property type="entry name" value="Probable DNA ligase"/>
    <property type="match status" value="1"/>
</dbReference>
<dbReference type="FunFam" id="3.30.470.30:FF:000012">
    <property type="entry name" value="Probable DNA ligase"/>
    <property type="match status" value="1"/>
</dbReference>
<dbReference type="Gene3D" id="1.10.3260.10">
    <property type="entry name" value="DNA ligase, ATP-dependent, N-terminal domain"/>
    <property type="match status" value="1"/>
</dbReference>
<dbReference type="Gene3D" id="3.30.470.30">
    <property type="entry name" value="DNA ligase/mRNA capping enzyme"/>
    <property type="match status" value="1"/>
</dbReference>
<dbReference type="Gene3D" id="2.40.50.140">
    <property type="entry name" value="Nucleic acid-binding proteins"/>
    <property type="match status" value="1"/>
</dbReference>
<dbReference type="HAMAP" id="MF_00407">
    <property type="entry name" value="DNA_ligase"/>
    <property type="match status" value="1"/>
</dbReference>
<dbReference type="InterPro" id="IPR050191">
    <property type="entry name" value="ATP-dep_DNA_ligase"/>
</dbReference>
<dbReference type="InterPro" id="IPR022865">
    <property type="entry name" value="DNA_ligae_ATP-dep_bac/arc"/>
</dbReference>
<dbReference type="InterPro" id="IPR000977">
    <property type="entry name" value="DNA_ligase_ATP-dep"/>
</dbReference>
<dbReference type="InterPro" id="IPR012309">
    <property type="entry name" value="DNA_ligase_ATP-dep_C"/>
</dbReference>
<dbReference type="InterPro" id="IPR012310">
    <property type="entry name" value="DNA_ligase_ATP-dep_cent"/>
</dbReference>
<dbReference type="InterPro" id="IPR016059">
    <property type="entry name" value="DNA_ligase_ATP-dep_CS"/>
</dbReference>
<dbReference type="InterPro" id="IPR012308">
    <property type="entry name" value="DNA_ligase_ATP-dep_N"/>
</dbReference>
<dbReference type="InterPro" id="IPR036599">
    <property type="entry name" value="DNA_ligase_N_sf"/>
</dbReference>
<dbReference type="InterPro" id="IPR012340">
    <property type="entry name" value="NA-bd_OB-fold"/>
</dbReference>
<dbReference type="NCBIfam" id="TIGR00574">
    <property type="entry name" value="dnl1"/>
    <property type="match status" value="1"/>
</dbReference>
<dbReference type="PANTHER" id="PTHR45674:SF7">
    <property type="entry name" value="DNA LIGASE"/>
    <property type="match status" value="1"/>
</dbReference>
<dbReference type="PANTHER" id="PTHR45674">
    <property type="entry name" value="DNA LIGASE 1/3 FAMILY MEMBER"/>
    <property type="match status" value="1"/>
</dbReference>
<dbReference type="Pfam" id="PF04679">
    <property type="entry name" value="DNA_ligase_A_C"/>
    <property type="match status" value="1"/>
</dbReference>
<dbReference type="Pfam" id="PF01068">
    <property type="entry name" value="DNA_ligase_A_M"/>
    <property type="match status" value="1"/>
</dbReference>
<dbReference type="Pfam" id="PF04675">
    <property type="entry name" value="DNA_ligase_A_N"/>
    <property type="match status" value="1"/>
</dbReference>
<dbReference type="SUPFAM" id="SSF117018">
    <property type="entry name" value="ATP-dependent DNA ligase DNA-binding domain"/>
    <property type="match status" value="1"/>
</dbReference>
<dbReference type="SUPFAM" id="SSF56091">
    <property type="entry name" value="DNA ligase/mRNA capping enzyme, catalytic domain"/>
    <property type="match status" value="1"/>
</dbReference>
<dbReference type="SUPFAM" id="SSF50249">
    <property type="entry name" value="Nucleic acid-binding proteins"/>
    <property type="match status" value="1"/>
</dbReference>
<dbReference type="PROSITE" id="PS00697">
    <property type="entry name" value="DNA_LIGASE_A1"/>
    <property type="match status" value="1"/>
</dbReference>
<dbReference type="PROSITE" id="PS00333">
    <property type="entry name" value="DNA_LIGASE_A2"/>
    <property type="match status" value="1"/>
</dbReference>
<dbReference type="PROSITE" id="PS50160">
    <property type="entry name" value="DNA_LIGASE_A3"/>
    <property type="match status" value="1"/>
</dbReference>
<sequence length="559" mass="63749">MRYSELADLYRRLEKTTLKTLKTKFVADFLKKTPDELLEIVPYLILGKVFPDWDERELGVGEKLLIKAVSMATGVPEKEIEDSVRDTGDLGESVALAIKKKKQKSFFSQPLTIKRVYDTFVKIAEAQGEGSQDRKMKYLANLFMDAEPEEGKYLARTVLGTMRTGVAEGILRDAIAEAFRVKPELVERAYMLTSDFGYVAKIAKLEGNEGLSKVRIQIGKPIRPMLAQNAASVKDALIEMGGEAAFEIKYDGARVQVHKDGDKVIVYSRRLENVTRSIPEVIEAIKAALKPEKAIVEGELVAVGENGRPRPFQYVLRRFRRKYNIDEMIEKIPLELNLFDVMFVDGESLIETKFIDRRNKLEEIVKESEKIKLAEQLITKKVEEAEAFYRRALELGHEGLMAKRLDSIYEPGNRGKKWLKIKPTMENLDLVIIGAEWGEGRRAHLLGSFLVAAYDPHSGEFLPVGKVGSGFTDEDLVEFTKMLKPYIVRQEGKFVEIEPKFVIEVTYQEIQKSPKYKSGFALRFPRYVALREDKSPEEADTIERVAELYELQERFKAKK</sequence>
<comment type="function">
    <text evidence="2">DNA ligase that seals nicks in double-stranded DNA during DNA replication, DNA recombination and DNA repair. Can also use NAD, but less efficiently than ATP.</text>
</comment>
<comment type="catalytic activity">
    <reaction evidence="1 2">
        <text>ATP + (deoxyribonucleotide)n-3'-hydroxyl + 5'-phospho-(deoxyribonucleotide)m = (deoxyribonucleotide)n+m + AMP + diphosphate.</text>
        <dbReference type="EC" id="6.5.1.6"/>
    </reaction>
</comment>
<comment type="catalytic activity">
    <reaction evidence="1 2">
        <text>NAD(+) + (deoxyribonucleotide)n-3'-hydroxyl + 5'-phospho-(deoxyribonucleotide)m = (deoxyribonucleotide)n+m + AMP + beta-nicotinamide D-nucleotide.</text>
        <dbReference type="EC" id="6.5.1.6"/>
    </reaction>
</comment>
<comment type="cofactor">
    <cofactor evidence="1 2">
        <name>Mg(2+)</name>
        <dbReference type="ChEBI" id="CHEBI:18420"/>
    </cofactor>
</comment>
<comment type="biophysicochemical properties">
    <phDependence>
        <text evidence="2">Optimum pH is 8.0.</text>
    </phDependence>
    <temperatureDependence>
        <text evidence="2">Still active at 100 degrees Celsius. Thermostable.</text>
    </temperatureDependence>
</comment>
<comment type="subunit">
    <text evidence="2">Monomer.</text>
</comment>
<comment type="similarity">
    <text evidence="1 4">Belongs to the ATP-dependent DNA ligase family.</text>
</comment>
<comment type="sequence caution" evidence="4">
    <conflict type="erroneous initiation">
        <sequence resource="EMBL-CDS" id="BAB15949"/>
    </conflict>
</comment>
<comment type="sequence caution" evidence="4">
    <conflict type="erroneous initiation">
        <sequence resource="EMBL-CDS" id="BAD86329"/>
    </conflict>
</comment>
<evidence type="ECO:0000255" key="1">
    <source>
        <dbReference type="HAMAP-Rule" id="MF_00407"/>
    </source>
</evidence>
<evidence type="ECO:0000269" key="2">
    <source>
    </source>
</evidence>
<evidence type="ECO:0000303" key="3">
    <source>
    </source>
</evidence>
<evidence type="ECO:0000305" key="4"/>
<name>DNLI_THEKO</name>
<accession>Q9HHC4</accession>
<accession>Q5JHF2</accession>
<feature type="chain" id="PRO_0000059615" description="DNA ligase">
    <location>
        <begin position="1"/>
        <end position="559"/>
    </location>
</feature>
<feature type="active site" description="N6-AMP-lysine intermediate" evidence="1">
    <location>
        <position position="249"/>
    </location>
</feature>
<feature type="binding site" evidence="1">
    <location>
        <position position="247"/>
    </location>
    <ligand>
        <name>ATP</name>
        <dbReference type="ChEBI" id="CHEBI:30616"/>
    </ligand>
</feature>
<feature type="binding site" evidence="1">
    <location>
        <position position="254"/>
    </location>
    <ligand>
        <name>ATP</name>
        <dbReference type="ChEBI" id="CHEBI:30616"/>
    </ligand>
</feature>
<feature type="binding site" evidence="1">
    <location>
        <position position="269"/>
    </location>
    <ligand>
        <name>ATP</name>
        <dbReference type="ChEBI" id="CHEBI:30616"/>
    </ligand>
</feature>
<feature type="binding site" evidence="1">
    <location>
        <position position="299"/>
    </location>
    <ligand>
        <name>ATP</name>
        <dbReference type="ChEBI" id="CHEBI:30616"/>
    </ligand>
</feature>
<feature type="binding site" evidence="1">
    <location>
        <position position="339"/>
    </location>
    <ligand>
        <name>ATP</name>
        <dbReference type="ChEBI" id="CHEBI:30616"/>
    </ligand>
</feature>
<feature type="binding site" evidence="1">
    <location>
        <position position="414"/>
    </location>
    <ligand>
        <name>ATP</name>
        <dbReference type="ChEBI" id="CHEBI:30616"/>
    </ligand>
</feature>
<feature type="binding site" evidence="1">
    <location>
        <position position="420"/>
    </location>
    <ligand>
        <name>ATP</name>
        <dbReference type="ChEBI" id="CHEBI:30616"/>
    </ligand>
</feature>
<proteinExistence type="evidence at protein level"/>
<reference key="1">
    <citation type="journal article" date="2000" name="J. Bacteriol.">
        <title>A DNA ligase from a hyperthermophilic archaeon with unique cofactor specificity.</title>
        <authorList>
            <person name="Nakatani M."/>
            <person name="Ezaki S."/>
            <person name="Atomi H."/>
            <person name="Imanaka T."/>
        </authorList>
    </citation>
    <scope>NUCLEOTIDE SEQUENCE [GENOMIC DNA]</scope>
    <scope>PARTIAL PROTEIN SEQUENCE</scope>
    <scope>FUNCTION</scope>
    <scope>CATALYTIC ACTIVITY</scope>
    <scope>COFACTOR</scope>
    <scope>BIOPHYSICOCHEMICAL PROPERTIES</scope>
    <scope>SUBUNIT</scope>
    <source>
        <strain>ATCC BAA-918 / JCM 12380 / KOD1</strain>
    </source>
</reference>
<reference key="2">
    <citation type="journal article" date="2005" name="Genome Res.">
        <title>Complete genome sequence of the hyperthermophilic archaeon Thermococcus kodakaraensis KOD1 and comparison with Pyrococcus genomes.</title>
        <authorList>
            <person name="Fukui T."/>
            <person name="Atomi H."/>
            <person name="Kanai T."/>
            <person name="Matsumi R."/>
            <person name="Fujiwara S."/>
            <person name="Imanaka T."/>
        </authorList>
    </citation>
    <scope>NUCLEOTIDE SEQUENCE [LARGE SCALE GENOMIC DNA]</scope>
    <source>
        <strain>ATCC BAA-918 / JCM 12380 / KOD1</strain>
    </source>
</reference>